<dbReference type="EMBL" id="AK149369">
    <property type="protein sequence ID" value="BAE28839.1"/>
    <property type="molecule type" value="mRNA"/>
</dbReference>
<dbReference type="EMBL" id="BC055027">
    <property type="protein sequence ID" value="AAH55027.1"/>
    <property type="status" value="ALT_INIT"/>
    <property type="molecule type" value="mRNA"/>
</dbReference>
<dbReference type="EMBL" id="BC069939">
    <property type="protein sequence ID" value="AAH69939.2"/>
    <property type="molecule type" value="mRNA"/>
</dbReference>
<dbReference type="EMBL" id="BC089616">
    <property type="protein sequence ID" value="AAH89616.1"/>
    <property type="molecule type" value="mRNA"/>
</dbReference>
<dbReference type="CCDS" id="CCDS26165.1"/>
<dbReference type="RefSeq" id="NP_001012310.2">
    <property type="nucleotide sequence ID" value="NM_001012310.2"/>
</dbReference>
<dbReference type="SMR" id="Q6IS41"/>
<dbReference type="FunCoup" id="Q6IS41">
    <property type="interactions" value="250"/>
</dbReference>
<dbReference type="STRING" id="10090.ENSMUSP00000050329"/>
<dbReference type="GlyGen" id="Q6IS41">
    <property type="glycosylation" value="1 site"/>
</dbReference>
<dbReference type="iPTMnet" id="Q6IS41"/>
<dbReference type="PhosphoSitePlus" id="Q6IS41"/>
<dbReference type="PaxDb" id="10090-ENSMUSP00000050329"/>
<dbReference type="Antibodypedia" id="27517">
    <property type="antibodies" value="89 antibodies from 22 providers"/>
</dbReference>
<dbReference type="DNASU" id="104910"/>
<dbReference type="Ensembl" id="ENSMUST00000057026.10">
    <property type="protein sequence ID" value="ENSMUSP00000050329.9"/>
    <property type="gene ID" value="ENSMUSG00000048856.10"/>
</dbReference>
<dbReference type="GeneID" id="104910"/>
<dbReference type="KEGG" id="mmu:104910"/>
<dbReference type="UCSC" id="uc007pae.1">
    <property type="organism name" value="mouse"/>
</dbReference>
<dbReference type="AGR" id="MGI:2144766"/>
<dbReference type="CTD" id="283600"/>
<dbReference type="MGI" id="MGI:2144766">
    <property type="gene designation" value="Slc25a47"/>
</dbReference>
<dbReference type="VEuPathDB" id="HostDB:ENSMUSG00000048856"/>
<dbReference type="eggNOG" id="KOG0762">
    <property type="taxonomic scope" value="Eukaryota"/>
</dbReference>
<dbReference type="GeneTree" id="ENSGT00940000159694"/>
<dbReference type="HOGENOM" id="CLU_015166_16_1_1"/>
<dbReference type="InParanoid" id="Q6IS41"/>
<dbReference type="OMA" id="HICRLRY"/>
<dbReference type="PhylomeDB" id="Q6IS41"/>
<dbReference type="TreeFam" id="TF351739"/>
<dbReference type="BioGRID-ORCS" id="104910">
    <property type="hits" value="1 hit in 76 CRISPR screens"/>
</dbReference>
<dbReference type="ChiTaRS" id="Slc25a47">
    <property type="organism name" value="mouse"/>
</dbReference>
<dbReference type="PRO" id="PR:Q6IS41"/>
<dbReference type="Proteomes" id="UP000000589">
    <property type="component" value="Chromosome 12"/>
</dbReference>
<dbReference type="RNAct" id="Q6IS41">
    <property type="molecule type" value="protein"/>
</dbReference>
<dbReference type="Bgee" id="ENSMUSG00000048856">
    <property type="expression patterns" value="Expressed in left lobe of liver and 161 other cell types or tissues"/>
</dbReference>
<dbReference type="ExpressionAtlas" id="Q6IS41">
    <property type="expression patterns" value="baseline and differential"/>
</dbReference>
<dbReference type="GO" id="GO:0005743">
    <property type="term" value="C:mitochondrial inner membrane"/>
    <property type="evidence" value="ECO:0000314"/>
    <property type="project" value="UniProtKB"/>
</dbReference>
<dbReference type="GO" id="GO:0005741">
    <property type="term" value="C:mitochondrial outer membrane"/>
    <property type="evidence" value="ECO:0000314"/>
    <property type="project" value="UniProtKB"/>
</dbReference>
<dbReference type="GO" id="GO:0005739">
    <property type="term" value="C:mitochondrion"/>
    <property type="evidence" value="ECO:0007005"/>
    <property type="project" value="MGI"/>
</dbReference>
<dbReference type="GO" id="GO:0008521">
    <property type="term" value="F:acetyl-CoA transmembrane transporter activity"/>
    <property type="evidence" value="ECO:0000315"/>
    <property type="project" value="UniProtKB"/>
</dbReference>
<dbReference type="GO" id="GO:0051724">
    <property type="term" value="F:NAD transmembrane transporter activity"/>
    <property type="evidence" value="ECO:0000315"/>
    <property type="project" value="UniProtKB"/>
</dbReference>
<dbReference type="FunFam" id="1.50.40.10:FF:000069">
    <property type="entry name" value="Solute carrier family 25 member 47"/>
    <property type="match status" value="1"/>
</dbReference>
<dbReference type="FunFam" id="1.50.40.10:FF:000072">
    <property type="entry name" value="solute carrier family 25 member 47"/>
    <property type="match status" value="1"/>
</dbReference>
<dbReference type="Gene3D" id="1.50.40.10">
    <property type="entry name" value="Mitochondrial carrier domain"/>
    <property type="match status" value="2"/>
</dbReference>
<dbReference type="InterPro" id="IPR002067">
    <property type="entry name" value="Mit_carrier"/>
</dbReference>
<dbReference type="InterPro" id="IPR050567">
    <property type="entry name" value="Mitochondrial_Carrier"/>
</dbReference>
<dbReference type="InterPro" id="IPR018108">
    <property type="entry name" value="Mitochondrial_sb/sol_carrier"/>
</dbReference>
<dbReference type="InterPro" id="IPR023395">
    <property type="entry name" value="Mt_carrier_dom_sf"/>
</dbReference>
<dbReference type="PANTHER" id="PTHR45624">
    <property type="entry name" value="MITOCHONDRIAL BASIC AMINO ACIDS TRANSPORTER-RELATED"/>
    <property type="match status" value="1"/>
</dbReference>
<dbReference type="PANTHER" id="PTHR45624:SF3">
    <property type="entry name" value="SOLUTE CARRIER FAMILY 25 MEMBER 47"/>
    <property type="match status" value="1"/>
</dbReference>
<dbReference type="Pfam" id="PF00153">
    <property type="entry name" value="Mito_carr"/>
    <property type="match status" value="3"/>
</dbReference>
<dbReference type="PRINTS" id="PR00926">
    <property type="entry name" value="MITOCARRIER"/>
</dbReference>
<dbReference type="SUPFAM" id="SSF103506">
    <property type="entry name" value="Mitochondrial carrier"/>
    <property type="match status" value="1"/>
</dbReference>
<dbReference type="PROSITE" id="PS50920">
    <property type="entry name" value="SOLCAR"/>
    <property type="match status" value="3"/>
</dbReference>
<keyword id="KW-0472">Membrane</keyword>
<keyword id="KW-0496">Mitochondrion</keyword>
<keyword id="KW-0999">Mitochondrion inner membrane</keyword>
<keyword id="KW-1000">Mitochondrion outer membrane</keyword>
<keyword id="KW-1185">Reference proteome</keyword>
<keyword id="KW-0677">Repeat</keyword>
<keyword id="KW-0812">Transmembrane</keyword>
<keyword id="KW-1133">Transmembrane helix</keyword>
<keyword id="KW-0813">Transport</keyword>
<name>S2547_MOUSE</name>
<protein>
    <recommendedName>
        <fullName>Solute carrier family 25 member 47</fullName>
    </recommendedName>
    <alternativeName>
        <fullName>Hepatocellular carcinoma down-regulated mitochondrial carrier homolog</fullName>
    </alternativeName>
    <alternativeName>
        <fullName evidence="3">Mitochondrial NAD(+) transporter SLC25A47</fullName>
    </alternativeName>
</protein>
<sequence length="310" mass="33646">MDFVAGAIGGVCGVAVGYPLDTVKVRIQTEAKYAGIWHCIRDTYRQERVWGFYRGLSLPVCTVSLVSSVSFGTYHHCLAHICRFRYGSTDAKPTKADITLSGCASGLVRVFLTSPTEVAKVRLQTQTQAQTQQRRSSASWTSGAPALCPTPTACLEPRPKYSGPLHCLVTVAREEGLRGLYKGSSALLLREGHSFATYFLSYAMLCEWLTPAGHSQPDVLGVLVAGGCAGVLAWAVATPMDVIKSRLQADGQGQHRYRGLLHCVVTSVREEGPRVLFKGLALNCCRAFPVNMVVFVAYEAVLRLTQSLLT</sequence>
<feature type="chain" id="PRO_0000291780" description="Solute carrier family 25 member 47">
    <location>
        <begin position="1"/>
        <end position="310"/>
    </location>
</feature>
<feature type="transmembrane region" description="Helical; Name=1" evidence="1">
    <location>
        <begin position="3"/>
        <end position="23"/>
    </location>
</feature>
<feature type="transmembrane region" description="Helical; Name=2" evidence="1">
    <location>
        <begin position="55"/>
        <end position="75"/>
    </location>
</feature>
<feature type="transmembrane region" description="Helical; Name=3" evidence="1">
    <location>
        <begin position="98"/>
        <end position="114"/>
    </location>
</feature>
<feature type="transmembrane region" description="Helical; Name=4" evidence="1">
    <location>
        <begin position="194"/>
        <end position="210"/>
    </location>
</feature>
<feature type="transmembrane region" description="Helical; Name=5" evidence="1">
    <location>
        <begin position="219"/>
        <end position="239"/>
    </location>
</feature>
<feature type="transmembrane region" description="Helical; Name=6" evidence="1">
    <location>
        <begin position="280"/>
        <end position="298"/>
    </location>
</feature>
<feature type="repeat" description="Solcar 1">
    <location>
        <begin position="1"/>
        <end position="80"/>
    </location>
</feature>
<feature type="repeat" description="Solcar 2">
    <location>
        <begin position="93"/>
        <end position="208"/>
    </location>
</feature>
<feature type="repeat" description="Solcar 3">
    <location>
        <begin position="217"/>
        <end position="304"/>
    </location>
</feature>
<feature type="sequence conflict" description="In Ref. 2; AAH89616." evidence="4" ref="2">
    <original>K</original>
    <variation>M</variation>
    <location>
        <position position="182"/>
    </location>
</feature>
<gene>
    <name evidence="3 5" type="primary">Slc25a47</name>
    <name type="synonym">Hdmcp</name>
</gene>
<reference key="1">
    <citation type="journal article" date="2005" name="Science">
        <title>The transcriptional landscape of the mammalian genome.</title>
        <authorList>
            <person name="Carninci P."/>
            <person name="Kasukawa T."/>
            <person name="Katayama S."/>
            <person name="Gough J."/>
            <person name="Frith M.C."/>
            <person name="Maeda N."/>
            <person name="Oyama R."/>
            <person name="Ravasi T."/>
            <person name="Lenhard B."/>
            <person name="Wells C."/>
            <person name="Kodzius R."/>
            <person name="Shimokawa K."/>
            <person name="Bajic V.B."/>
            <person name="Brenner S.E."/>
            <person name="Batalov S."/>
            <person name="Forrest A.R."/>
            <person name="Zavolan M."/>
            <person name="Davis M.J."/>
            <person name="Wilming L.G."/>
            <person name="Aidinis V."/>
            <person name="Allen J.E."/>
            <person name="Ambesi-Impiombato A."/>
            <person name="Apweiler R."/>
            <person name="Aturaliya R.N."/>
            <person name="Bailey T.L."/>
            <person name="Bansal M."/>
            <person name="Baxter L."/>
            <person name="Beisel K.W."/>
            <person name="Bersano T."/>
            <person name="Bono H."/>
            <person name="Chalk A.M."/>
            <person name="Chiu K.P."/>
            <person name="Choudhary V."/>
            <person name="Christoffels A."/>
            <person name="Clutterbuck D.R."/>
            <person name="Crowe M.L."/>
            <person name="Dalla E."/>
            <person name="Dalrymple B.P."/>
            <person name="de Bono B."/>
            <person name="Della Gatta G."/>
            <person name="di Bernardo D."/>
            <person name="Down T."/>
            <person name="Engstrom P."/>
            <person name="Fagiolini M."/>
            <person name="Faulkner G."/>
            <person name="Fletcher C.F."/>
            <person name="Fukushima T."/>
            <person name="Furuno M."/>
            <person name="Futaki S."/>
            <person name="Gariboldi M."/>
            <person name="Georgii-Hemming P."/>
            <person name="Gingeras T.R."/>
            <person name="Gojobori T."/>
            <person name="Green R.E."/>
            <person name="Gustincich S."/>
            <person name="Harbers M."/>
            <person name="Hayashi Y."/>
            <person name="Hensch T.K."/>
            <person name="Hirokawa N."/>
            <person name="Hill D."/>
            <person name="Huminiecki L."/>
            <person name="Iacono M."/>
            <person name="Ikeo K."/>
            <person name="Iwama A."/>
            <person name="Ishikawa T."/>
            <person name="Jakt M."/>
            <person name="Kanapin A."/>
            <person name="Katoh M."/>
            <person name="Kawasawa Y."/>
            <person name="Kelso J."/>
            <person name="Kitamura H."/>
            <person name="Kitano H."/>
            <person name="Kollias G."/>
            <person name="Krishnan S.P."/>
            <person name="Kruger A."/>
            <person name="Kummerfeld S.K."/>
            <person name="Kurochkin I.V."/>
            <person name="Lareau L.F."/>
            <person name="Lazarevic D."/>
            <person name="Lipovich L."/>
            <person name="Liu J."/>
            <person name="Liuni S."/>
            <person name="McWilliam S."/>
            <person name="Madan Babu M."/>
            <person name="Madera M."/>
            <person name="Marchionni L."/>
            <person name="Matsuda H."/>
            <person name="Matsuzawa S."/>
            <person name="Miki H."/>
            <person name="Mignone F."/>
            <person name="Miyake S."/>
            <person name="Morris K."/>
            <person name="Mottagui-Tabar S."/>
            <person name="Mulder N."/>
            <person name="Nakano N."/>
            <person name="Nakauchi H."/>
            <person name="Ng P."/>
            <person name="Nilsson R."/>
            <person name="Nishiguchi S."/>
            <person name="Nishikawa S."/>
            <person name="Nori F."/>
            <person name="Ohara O."/>
            <person name="Okazaki Y."/>
            <person name="Orlando V."/>
            <person name="Pang K.C."/>
            <person name="Pavan W.J."/>
            <person name="Pavesi G."/>
            <person name="Pesole G."/>
            <person name="Petrovsky N."/>
            <person name="Piazza S."/>
            <person name="Reed J."/>
            <person name="Reid J.F."/>
            <person name="Ring B.Z."/>
            <person name="Ringwald M."/>
            <person name="Rost B."/>
            <person name="Ruan Y."/>
            <person name="Salzberg S.L."/>
            <person name="Sandelin A."/>
            <person name="Schneider C."/>
            <person name="Schoenbach C."/>
            <person name="Sekiguchi K."/>
            <person name="Semple C.A."/>
            <person name="Seno S."/>
            <person name="Sessa L."/>
            <person name="Sheng Y."/>
            <person name="Shibata Y."/>
            <person name="Shimada H."/>
            <person name="Shimada K."/>
            <person name="Silva D."/>
            <person name="Sinclair B."/>
            <person name="Sperling S."/>
            <person name="Stupka E."/>
            <person name="Sugiura K."/>
            <person name="Sultana R."/>
            <person name="Takenaka Y."/>
            <person name="Taki K."/>
            <person name="Tammoja K."/>
            <person name="Tan S.L."/>
            <person name="Tang S."/>
            <person name="Taylor M.S."/>
            <person name="Tegner J."/>
            <person name="Teichmann S.A."/>
            <person name="Ueda H.R."/>
            <person name="van Nimwegen E."/>
            <person name="Verardo R."/>
            <person name="Wei C.L."/>
            <person name="Yagi K."/>
            <person name="Yamanishi H."/>
            <person name="Zabarovsky E."/>
            <person name="Zhu S."/>
            <person name="Zimmer A."/>
            <person name="Hide W."/>
            <person name="Bult C."/>
            <person name="Grimmond S.M."/>
            <person name="Teasdale R.D."/>
            <person name="Liu E.T."/>
            <person name="Brusic V."/>
            <person name="Quackenbush J."/>
            <person name="Wahlestedt C."/>
            <person name="Mattick J.S."/>
            <person name="Hume D.A."/>
            <person name="Kai C."/>
            <person name="Sasaki D."/>
            <person name="Tomaru Y."/>
            <person name="Fukuda S."/>
            <person name="Kanamori-Katayama M."/>
            <person name="Suzuki M."/>
            <person name="Aoki J."/>
            <person name="Arakawa T."/>
            <person name="Iida J."/>
            <person name="Imamura K."/>
            <person name="Itoh M."/>
            <person name="Kato T."/>
            <person name="Kawaji H."/>
            <person name="Kawagashira N."/>
            <person name="Kawashima T."/>
            <person name="Kojima M."/>
            <person name="Kondo S."/>
            <person name="Konno H."/>
            <person name="Nakano K."/>
            <person name="Ninomiya N."/>
            <person name="Nishio T."/>
            <person name="Okada M."/>
            <person name="Plessy C."/>
            <person name="Shibata K."/>
            <person name="Shiraki T."/>
            <person name="Suzuki S."/>
            <person name="Tagami M."/>
            <person name="Waki K."/>
            <person name="Watahiki A."/>
            <person name="Okamura-Oho Y."/>
            <person name="Suzuki H."/>
            <person name="Kawai J."/>
            <person name="Hayashizaki Y."/>
        </authorList>
    </citation>
    <scope>NUCLEOTIDE SEQUENCE [LARGE SCALE MRNA]</scope>
    <source>
        <strain>C57BL/6J</strain>
        <tissue>Liver</tissue>
    </source>
</reference>
<reference key="2">
    <citation type="journal article" date="2004" name="Genome Res.">
        <title>The status, quality, and expansion of the NIH full-length cDNA project: the Mammalian Gene Collection (MGC).</title>
        <authorList>
            <consortium name="The MGC Project Team"/>
        </authorList>
    </citation>
    <scope>NUCLEOTIDE SEQUENCE [LARGE SCALE MRNA]</scope>
    <source>
        <strain>FVB/N</strain>
        <tissue>Liver</tissue>
    </source>
</reference>
<reference key="3">
    <citation type="journal article" date="2023" name="Hepatology">
        <title>Hepatic mitochondrial NAD + transporter SLC25A47 activates AMPKalpha mediating lipid metabolism and tumorigenesis.</title>
        <authorList>
            <person name="Cheng L."/>
            <person name="Deepak R.N.V.K."/>
            <person name="Wang G."/>
            <person name="Meng Z."/>
            <person name="Tao L."/>
            <person name="Xie M."/>
            <person name="Chi W."/>
            <person name="Zhang Y."/>
            <person name="Yang M."/>
            <person name="Liao Y."/>
            <person name="Chen R."/>
            <person name="Liang Y."/>
            <person name="Zhang J."/>
            <person name="Huang Y."/>
            <person name="Wang W."/>
            <person name="Guo Z."/>
            <person name="Wang Y."/>
            <person name="Lin J.D."/>
            <person name="Fan H."/>
            <person name="Chen L."/>
        </authorList>
    </citation>
    <scope>FUNCTION</scope>
    <scope>TRANSPORTER ACTIVITY</scope>
    <scope>SUBCELLULAR LOCATION</scope>
    <scope>TISSUE SPECIFICITY</scope>
    <scope>DISRUPTION PHENOTYPE</scope>
</reference>
<accession>Q6IS41</accession>
<accession>Q3UES2</accession>
<accession>Q5FW58</accession>
<accession>Q7TPP3</accession>
<evidence type="ECO:0000255" key="1"/>
<evidence type="ECO:0000269" key="2">
    <source>
    </source>
</evidence>
<evidence type="ECO:0000303" key="3">
    <source>
    </source>
</evidence>
<evidence type="ECO:0000305" key="4"/>
<evidence type="ECO:0000312" key="5">
    <source>
        <dbReference type="MGI" id="MGI:2144766"/>
    </source>
</evidence>
<comment type="function">
    <text evidence="2">Mitochondrial NAD(+) transporter that acts as a 'metabolic gate' in hepatic lipogenesis. Provides NAD(+) substrate to mitochondrial SIRT3 deacetylase and enables its NAD(+)-dependent activities in mitochondrial energy metabolism. This triggers downstream activation of PRKAA1/AMPK-alpha signaling cascade that negatively regulates sterol regulatory element-binding protein (SREBP) transcriptional activities and ATP-consuming lipogenesis to restore cellular energy balance. May transport other mitochondrial metabolites having an aromatic nucleotide and phosphate groups, such as acetyl-CoA. Does not transport amino acids. The transport mechanism remains to be elucidated.</text>
</comment>
<comment type="catalytic activity">
    <reaction evidence="2">
        <text>NAD(+)(in) = NAD(+)(out)</text>
        <dbReference type="Rhea" id="RHEA:65408"/>
        <dbReference type="ChEBI" id="CHEBI:57540"/>
    </reaction>
</comment>
<comment type="catalytic activity">
    <reaction evidence="2">
        <text>acetyl-CoA(in) = acetyl-CoA(out)</text>
        <dbReference type="Rhea" id="RHEA:75039"/>
        <dbReference type="ChEBI" id="CHEBI:57288"/>
    </reaction>
</comment>
<comment type="subcellular location">
    <subcellularLocation>
        <location evidence="2">Mitochondrion inner membrane</location>
        <topology evidence="1">Multi-pass membrane protein</topology>
    </subcellularLocation>
    <subcellularLocation>
        <location evidence="2">Mitochondrion outer membrane</location>
        <topology evidence="1">Multi-pass membrane protein</topology>
    </subcellularLocation>
</comment>
<comment type="tissue specificity">
    <text evidence="2">Specifically expressed in liver (at protein level).</text>
</comment>
<comment type="disruption phenotype">
    <text evidence="2">Mutant mice show increased hepatic steatosis upon methionine- and choline-deficient or high-fat diet associated with increased hepatic lipid droplets and triglycerides and cholesterol levels. They spontaneously develop hepatocellular carcinomas.</text>
</comment>
<comment type="miscellaneous">
    <text evidence="2">SLC25A47 is transcriptionally up-regulated in response to antihyperglycemic drug metformin. Promotes metformin pharmacological effects.</text>
</comment>
<comment type="similarity">
    <text evidence="4">Belongs to the mitochondrial carrier (TC 2.A.29) family.</text>
</comment>
<comment type="sequence caution" evidence="4">
    <conflict type="erroneous initiation">
        <sequence resource="EMBL-CDS" id="AAH55027"/>
    </conflict>
    <text>Extended N-terminus.</text>
</comment>
<proteinExistence type="evidence at protein level"/>
<organism>
    <name type="scientific">Mus musculus</name>
    <name type="common">Mouse</name>
    <dbReference type="NCBI Taxonomy" id="10090"/>
    <lineage>
        <taxon>Eukaryota</taxon>
        <taxon>Metazoa</taxon>
        <taxon>Chordata</taxon>
        <taxon>Craniata</taxon>
        <taxon>Vertebrata</taxon>
        <taxon>Euteleostomi</taxon>
        <taxon>Mammalia</taxon>
        <taxon>Eutheria</taxon>
        <taxon>Euarchontoglires</taxon>
        <taxon>Glires</taxon>
        <taxon>Rodentia</taxon>
        <taxon>Myomorpha</taxon>
        <taxon>Muroidea</taxon>
        <taxon>Muridae</taxon>
        <taxon>Murinae</taxon>
        <taxon>Mus</taxon>
        <taxon>Mus</taxon>
    </lineage>
</organism>